<gene>
    <name evidence="4" type="primary">CYP71BQ17</name>
</gene>
<proteinExistence type="evidence at protein level"/>
<protein>
    <recommendedName>
        <fullName evidence="4">Melianol synthase CYP71BQ17</fullName>
        <ecNumber evidence="3">1.14.14.-</ecNumber>
    </recommendedName>
    <alternativeName>
        <fullName evidence="4">Cytochrome P450 family 71 subfamily BQ polypeptide 17</fullName>
        <shortName evidence="4">AaCYP71BQ17</shortName>
    </alternativeName>
</protein>
<sequence>MRTKLPMDFPISKMPHLPSLPVSLSFLLFFLMLVRYWKNSKGQGKPPPGPRPLPILGNLHQLADGLPHHAVTKLCRKYGPVLKLKLGQLDVVVISSPEVAKEVLKTNEINFAQRPEVYAVEIMSYDHSSIVFSPYGDYWREMRKISVLELLSNRRVLSFRSIREDEVWNLVEFLSSSDERTINLSEKIFSMTNDIISRAAFGRKCNDQHNFTVLLEEIMKIGAGFAIADLYPSLTFLRPLTGVKPALMRIQNKMDKILEDIVTEHRIKRKAAANSNIKFEEEDLVDTLLNYAEANKDEFHLTLDQVKAVTLDIFSAGSETSATSMEWAMSELLKNPRVMKKAQEEVRQACKGKSKIREADIQKLDYLKLVIKETFRLHAPGPFTPRESRERCEIGGYTIPAKAKVLINLHAMGRDPTIWTDPDCFQPERFQGSSVDFKGNHFELIPFGGGRRICPGISFATANIELGLAQMLYHFDWKLPNGKKLEDLDMSENFGMTARRKENLQVIATTHIPFQK</sequence>
<dbReference type="EC" id="1.14.14.-" evidence="3"/>
<dbReference type="EMBL" id="ON595699">
    <property type="protein sequence ID" value="UTU07509.1"/>
    <property type="molecule type" value="mRNA"/>
</dbReference>
<dbReference type="SMR" id="P0DXI4"/>
<dbReference type="UniPathway" id="UPA00213"/>
<dbReference type="GO" id="GO:0016020">
    <property type="term" value="C:membrane"/>
    <property type="evidence" value="ECO:0007669"/>
    <property type="project" value="UniProtKB-SubCell"/>
</dbReference>
<dbReference type="GO" id="GO:0020037">
    <property type="term" value="F:heme binding"/>
    <property type="evidence" value="ECO:0007669"/>
    <property type="project" value="InterPro"/>
</dbReference>
<dbReference type="GO" id="GO:0005506">
    <property type="term" value="F:iron ion binding"/>
    <property type="evidence" value="ECO:0007669"/>
    <property type="project" value="InterPro"/>
</dbReference>
<dbReference type="GO" id="GO:0004497">
    <property type="term" value="F:monooxygenase activity"/>
    <property type="evidence" value="ECO:0007669"/>
    <property type="project" value="UniProtKB-KW"/>
</dbReference>
<dbReference type="GO" id="GO:0016705">
    <property type="term" value="F:oxidoreductase activity, acting on paired donors, with incorporation or reduction of molecular oxygen"/>
    <property type="evidence" value="ECO:0007669"/>
    <property type="project" value="InterPro"/>
</dbReference>
<dbReference type="CDD" id="cd11072">
    <property type="entry name" value="CYP71-like"/>
    <property type="match status" value="1"/>
</dbReference>
<dbReference type="FunFam" id="1.10.630.10:FF:000043">
    <property type="entry name" value="Cytochrome P450 99A2"/>
    <property type="match status" value="1"/>
</dbReference>
<dbReference type="Gene3D" id="1.10.630.10">
    <property type="entry name" value="Cytochrome P450"/>
    <property type="match status" value="1"/>
</dbReference>
<dbReference type="InterPro" id="IPR001128">
    <property type="entry name" value="Cyt_P450"/>
</dbReference>
<dbReference type="InterPro" id="IPR017972">
    <property type="entry name" value="Cyt_P450_CS"/>
</dbReference>
<dbReference type="InterPro" id="IPR002401">
    <property type="entry name" value="Cyt_P450_E_grp-I"/>
</dbReference>
<dbReference type="InterPro" id="IPR036396">
    <property type="entry name" value="Cyt_P450_sf"/>
</dbReference>
<dbReference type="PANTHER" id="PTHR47955:SF8">
    <property type="entry name" value="CYTOCHROME P450 71D11-LIKE"/>
    <property type="match status" value="1"/>
</dbReference>
<dbReference type="PANTHER" id="PTHR47955">
    <property type="entry name" value="CYTOCHROME P450 FAMILY 71 PROTEIN"/>
    <property type="match status" value="1"/>
</dbReference>
<dbReference type="Pfam" id="PF00067">
    <property type="entry name" value="p450"/>
    <property type="match status" value="1"/>
</dbReference>
<dbReference type="PRINTS" id="PR00463">
    <property type="entry name" value="EP450I"/>
</dbReference>
<dbReference type="PRINTS" id="PR00385">
    <property type="entry name" value="P450"/>
</dbReference>
<dbReference type="SUPFAM" id="SSF48264">
    <property type="entry name" value="Cytochrome P450"/>
    <property type="match status" value="1"/>
</dbReference>
<dbReference type="PROSITE" id="PS00086">
    <property type="entry name" value="CYTOCHROME_P450"/>
    <property type="match status" value="1"/>
</dbReference>
<evidence type="ECO:0000250" key="1">
    <source>
        <dbReference type="UniProtKB" id="Q96242"/>
    </source>
</evidence>
<evidence type="ECO:0000255" key="2"/>
<evidence type="ECO:0000269" key="3">
    <source>
    </source>
</evidence>
<evidence type="ECO:0000303" key="4">
    <source>
    </source>
</evidence>
<evidence type="ECO:0000305" key="5"/>
<reference key="1">
    <citation type="journal article" date="2022" name="Front. Plant Sci.">
        <title>Identification of early quassinoid biosynthesis in the invasive tree of heaven (Ailanthus altissima) confirms evolutionary origin from protolimonoids.</title>
        <authorList>
            <person name="Chuang L."/>
            <person name="Liu S."/>
            <person name="Biedermann D."/>
            <person name="Franke J."/>
        </authorList>
    </citation>
    <scope>NUCLEOTIDE SEQUENCE [MRNA]</scope>
    <scope>FUNCTION</scope>
    <scope>CATALYTIC ACTIVITY</scope>
    <scope>PATHWAY</scope>
    <scope>TISSUE SPECIFICITY</scope>
</reference>
<feature type="chain" id="PRO_0000461366" description="Melianol synthase CYP71BQ17">
    <location>
        <begin position="1"/>
        <end position="516"/>
    </location>
</feature>
<feature type="transmembrane region" description="Helical" evidence="2">
    <location>
        <begin position="14"/>
        <end position="34"/>
    </location>
</feature>
<feature type="binding site" description="axial binding residue" evidence="1">
    <location>
        <position position="454"/>
    </location>
    <ligand>
        <name>heme</name>
        <dbReference type="ChEBI" id="CHEBI:30413"/>
    </ligand>
    <ligandPart>
        <name>Fe</name>
        <dbReference type="ChEBI" id="CHEBI:18248"/>
    </ligandPart>
</feature>
<name>CBQ17_AILAL</name>
<comment type="function">
    <text evidence="3">Monooxygenase involved in the biosynthesis of quassinoids triterpene natural products such as ailanthone, chaparrinone, glaucarubinone and amarolide, allelopathic degraded triterpene lactones inhibiting the growth of other plants, and possessing antimalarial, antifeedant, insecticidal, anti-inflammatory and anticancer activities (PubMed:36082289). Catalyzes the conversion of dihydroniloticin to the protolimonoid melianol (PubMed:36082289).</text>
</comment>
<comment type="catalytic activity">
    <reaction evidence="3">
        <text>dihydroniloticin + 2 reduced [NADPH--hemoprotein reductase] + 2 O2 = melianol + 2 oxidized [NADPH--hemoprotein reductase] + 3 H2O + 2 H(+)</text>
        <dbReference type="Rhea" id="RHEA:80283"/>
        <dbReference type="Rhea" id="RHEA-COMP:11964"/>
        <dbReference type="Rhea" id="RHEA-COMP:11965"/>
        <dbReference type="ChEBI" id="CHEBI:15377"/>
        <dbReference type="ChEBI" id="CHEBI:15378"/>
        <dbReference type="ChEBI" id="CHEBI:15379"/>
        <dbReference type="ChEBI" id="CHEBI:57618"/>
        <dbReference type="ChEBI" id="CHEBI:58210"/>
        <dbReference type="ChEBI" id="CHEBI:231450"/>
        <dbReference type="ChEBI" id="CHEBI:231451"/>
    </reaction>
    <physiologicalReaction direction="left-to-right" evidence="3">
        <dbReference type="Rhea" id="RHEA:80284"/>
    </physiologicalReaction>
</comment>
<comment type="cofactor">
    <cofactor evidence="1">
        <name>heme</name>
        <dbReference type="ChEBI" id="CHEBI:30413"/>
    </cofactor>
</comment>
<comment type="pathway">
    <text evidence="3">Secondary metabolite biosynthesis; terpenoid biosynthesis.</text>
</comment>
<comment type="subcellular location">
    <subcellularLocation>
        <location evidence="2">Membrane</location>
        <topology evidence="2">Single-pass membrane protein</topology>
    </subcellularLocation>
</comment>
<comment type="tissue specificity">
    <text evidence="3">Mainly expressed in roots and, to a lesser extent, in stems and old leaves.</text>
</comment>
<comment type="similarity">
    <text evidence="5">Belongs to the cytochrome P450 family.</text>
</comment>
<keyword id="KW-0349">Heme</keyword>
<keyword id="KW-0408">Iron</keyword>
<keyword id="KW-0472">Membrane</keyword>
<keyword id="KW-0479">Metal-binding</keyword>
<keyword id="KW-0503">Monooxygenase</keyword>
<keyword id="KW-0560">Oxidoreductase</keyword>
<keyword id="KW-0812">Transmembrane</keyword>
<keyword id="KW-1133">Transmembrane helix</keyword>
<accession>P0DXI4</accession>
<organism>
    <name type="scientific">Ailanthus altissima</name>
    <name type="common">Tree-of-heaven</name>
    <name type="synonym">Toxicodendron altissimum</name>
    <dbReference type="NCBI Taxonomy" id="2768810"/>
    <lineage>
        <taxon>Eukaryota</taxon>
        <taxon>Viridiplantae</taxon>
        <taxon>Streptophyta</taxon>
        <taxon>Embryophyta</taxon>
        <taxon>Tracheophyta</taxon>
        <taxon>Spermatophyta</taxon>
        <taxon>Magnoliopsida</taxon>
        <taxon>eudicotyledons</taxon>
        <taxon>Gunneridae</taxon>
        <taxon>Pentapetalae</taxon>
        <taxon>rosids</taxon>
        <taxon>malvids</taxon>
        <taxon>Sapindales</taxon>
        <taxon>Simaroubaceae</taxon>
        <taxon>Ailanthus</taxon>
    </lineage>
</organism>